<keyword id="KW-0050">Antiport</keyword>
<keyword id="KW-1003">Cell membrane</keyword>
<keyword id="KW-0406">Ion transport</keyword>
<keyword id="KW-0472">Membrane</keyword>
<keyword id="KW-1185">Reference proteome</keyword>
<keyword id="KW-0915">Sodium</keyword>
<keyword id="KW-0739">Sodium transport</keyword>
<keyword id="KW-0812">Transmembrane</keyword>
<keyword id="KW-1133">Transmembrane helix</keyword>
<keyword id="KW-0813">Transport</keyword>
<proteinExistence type="inferred from homology"/>
<reference key="1">
    <citation type="journal article" date="2007" name="Nat. Biotechnol.">
        <title>Complete genome sequence of the erythromycin-producing bacterium Saccharopolyspora erythraea NRRL23338.</title>
        <authorList>
            <person name="Oliynyk M."/>
            <person name="Samborskyy M."/>
            <person name="Lester J.B."/>
            <person name="Mironenko T."/>
            <person name="Scott N."/>
            <person name="Dickens S."/>
            <person name="Haydock S.F."/>
            <person name="Leadlay P.F."/>
        </authorList>
    </citation>
    <scope>NUCLEOTIDE SEQUENCE [LARGE SCALE GENOMIC DNA]</scope>
    <source>
        <strain>ATCC 11635 / DSM 40517 / JCM 4748 / NBRC 13426 / NCIMB 8594 / NRRL 2338</strain>
    </source>
</reference>
<comment type="function">
    <text evidence="1">Na(+)/H(+) antiporter that extrudes sodium in exchange for external protons.</text>
</comment>
<comment type="catalytic activity">
    <reaction evidence="1">
        <text>Na(+)(in) + 2 H(+)(out) = Na(+)(out) + 2 H(+)(in)</text>
        <dbReference type="Rhea" id="RHEA:29251"/>
        <dbReference type="ChEBI" id="CHEBI:15378"/>
        <dbReference type="ChEBI" id="CHEBI:29101"/>
    </reaction>
    <physiologicalReaction direction="left-to-right" evidence="1">
        <dbReference type="Rhea" id="RHEA:29252"/>
    </physiologicalReaction>
</comment>
<comment type="subcellular location">
    <subcellularLocation>
        <location evidence="1">Cell membrane</location>
        <topology evidence="1">Multi-pass membrane protein</topology>
    </subcellularLocation>
</comment>
<comment type="similarity">
    <text evidence="1">Belongs to the NhaA Na(+)/H(+) (TC 2.A.33) antiporter family.</text>
</comment>
<sequence length="412" mass="43081">MSKSARNRTRRNPDGQQGSARSFDFAEYLRTETVGGMVLLAAAALALVLANSPAEELYRTVRDFTVGPHFLHLDLTIGEWAKDGLLAIFFFVAGLELKRELVVGELADRKTATLPVVAALGGMVVPAVLAFAIGHGAPGAHAAWAIPVATDIAFALGVLSLTGSWMPTAARVFLLSLAVVDDLGAIVVIAVLFTSGLSVLALLAAAALCAVYWYAQKRRITTPFLYVPLAVATWIAVHSSGIHATIAGVALGLLTRVRRDLHETASPAMRLEHRLQPWSAGLIVPVFALFAAGVPVDGEALVAMTHDRVAIAVVVGLVVGKLVGIFGSSYLAVKIGIGAKPRGLRWRDLSALAMLGGVGFTVSLLIAELSLEGAAAERAKAAVLIASALASLLAAVMLLRRGRKVRNGDASA</sequence>
<accession>A4F6L1</accession>
<gene>
    <name evidence="1" type="primary">nhaA1</name>
    <name type="ordered locus">SACE_0336</name>
</gene>
<name>NHAA1_SACEN</name>
<protein>
    <recommendedName>
        <fullName evidence="1">Na(+)/H(+) antiporter NhaA 1</fullName>
    </recommendedName>
    <alternativeName>
        <fullName evidence="1">Sodium/proton antiporter NhaA 1</fullName>
    </alternativeName>
</protein>
<dbReference type="EMBL" id="AM420293">
    <property type="protein sequence ID" value="CAL99685.1"/>
    <property type="molecule type" value="Genomic_DNA"/>
</dbReference>
<dbReference type="RefSeq" id="WP_009951522.1">
    <property type="nucleotide sequence ID" value="NC_009142.1"/>
</dbReference>
<dbReference type="SMR" id="A4F6L1"/>
<dbReference type="STRING" id="405948.SACE_0336"/>
<dbReference type="KEGG" id="sen:SACE_0336"/>
<dbReference type="eggNOG" id="COG3004">
    <property type="taxonomic scope" value="Bacteria"/>
</dbReference>
<dbReference type="HOGENOM" id="CLU_015803_0_0_11"/>
<dbReference type="OrthoDB" id="117402at2"/>
<dbReference type="Proteomes" id="UP000006728">
    <property type="component" value="Chromosome"/>
</dbReference>
<dbReference type="GO" id="GO:0005886">
    <property type="term" value="C:plasma membrane"/>
    <property type="evidence" value="ECO:0007669"/>
    <property type="project" value="UniProtKB-SubCell"/>
</dbReference>
<dbReference type="GO" id="GO:0015385">
    <property type="term" value="F:sodium:proton antiporter activity"/>
    <property type="evidence" value="ECO:0007669"/>
    <property type="project" value="TreeGrafter"/>
</dbReference>
<dbReference type="GO" id="GO:0006885">
    <property type="term" value="P:regulation of pH"/>
    <property type="evidence" value="ECO:0007669"/>
    <property type="project" value="InterPro"/>
</dbReference>
<dbReference type="Gene3D" id="1.20.1530.10">
    <property type="entry name" value="Na+/H+ antiporter like domain"/>
    <property type="match status" value="1"/>
</dbReference>
<dbReference type="HAMAP" id="MF_01844">
    <property type="entry name" value="NhaA"/>
    <property type="match status" value="1"/>
</dbReference>
<dbReference type="InterPro" id="IPR023171">
    <property type="entry name" value="Na/H_antiporter_dom_sf"/>
</dbReference>
<dbReference type="InterPro" id="IPR004670">
    <property type="entry name" value="NhaA"/>
</dbReference>
<dbReference type="NCBIfam" id="TIGR00773">
    <property type="entry name" value="NhaA"/>
    <property type="match status" value="1"/>
</dbReference>
<dbReference type="PANTHER" id="PTHR30341:SF0">
    <property type="entry name" value="NA(+)_H(+) ANTIPORTER NHAA"/>
    <property type="match status" value="1"/>
</dbReference>
<dbReference type="PANTHER" id="PTHR30341">
    <property type="entry name" value="SODIUM ION/PROTON ANTIPORTER NHAA-RELATED"/>
    <property type="match status" value="1"/>
</dbReference>
<dbReference type="Pfam" id="PF06965">
    <property type="entry name" value="Na_H_antiport_1"/>
    <property type="match status" value="1"/>
</dbReference>
<feature type="chain" id="PRO_0000334406" description="Na(+)/H(+) antiporter NhaA 1">
    <location>
        <begin position="1"/>
        <end position="412"/>
    </location>
</feature>
<feature type="transmembrane region" description="Helical" evidence="1">
    <location>
        <begin position="34"/>
        <end position="54"/>
    </location>
</feature>
<feature type="transmembrane region" description="Helical" evidence="1">
    <location>
        <begin position="75"/>
        <end position="95"/>
    </location>
</feature>
<feature type="transmembrane region" description="Helical" evidence="1">
    <location>
        <begin position="114"/>
        <end position="134"/>
    </location>
</feature>
<feature type="transmembrane region" description="Helical" evidence="1">
    <location>
        <begin position="142"/>
        <end position="162"/>
    </location>
</feature>
<feature type="transmembrane region" description="Helical" evidence="1">
    <location>
        <begin position="183"/>
        <end position="203"/>
    </location>
</feature>
<feature type="transmembrane region" description="Helical" evidence="1">
    <location>
        <begin position="234"/>
        <end position="254"/>
    </location>
</feature>
<feature type="transmembrane region" description="Helical" evidence="1">
    <location>
        <begin position="282"/>
        <end position="302"/>
    </location>
</feature>
<feature type="transmembrane region" description="Helical" evidence="1">
    <location>
        <begin position="309"/>
        <end position="329"/>
    </location>
</feature>
<feature type="transmembrane region" description="Helical" evidence="1">
    <location>
        <begin position="349"/>
        <end position="369"/>
    </location>
</feature>
<feature type="transmembrane region" description="Helical" evidence="1">
    <location>
        <begin position="379"/>
        <end position="399"/>
    </location>
</feature>
<organism>
    <name type="scientific">Saccharopolyspora erythraea (strain ATCC 11635 / DSM 40517 / JCM 4748 / NBRC 13426 / NCIMB 8594 / NRRL 2338)</name>
    <dbReference type="NCBI Taxonomy" id="405948"/>
    <lineage>
        <taxon>Bacteria</taxon>
        <taxon>Bacillati</taxon>
        <taxon>Actinomycetota</taxon>
        <taxon>Actinomycetes</taxon>
        <taxon>Pseudonocardiales</taxon>
        <taxon>Pseudonocardiaceae</taxon>
        <taxon>Saccharopolyspora</taxon>
    </lineage>
</organism>
<evidence type="ECO:0000255" key="1">
    <source>
        <dbReference type="HAMAP-Rule" id="MF_01844"/>
    </source>
</evidence>